<proteinExistence type="inferred from homology"/>
<evidence type="ECO:0000255" key="1">
    <source>
        <dbReference type="HAMAP-Rule" id="MF_00197"/>
    </source>
</evidence>
<evidence type="ECO:0000305" key="2"/>
<protein>
    <recommendedName>
        <fullName evidence="1">Diaminopimelate epimerase</fullName>
        <shortName evidence="1">DAP epimerase</shortName>
        <ecNumber evidence="1">5.1.1.7</ecNumber>
    </recommendedName>
    <alternativeName>
        <fullName evidence="1">PLP-independent amino acid racemase</fullName>
    </alternativeName>
</protein>
<organism>
    <name type="scientific">Yersinia pestis</name>
    <dbReference type="NCBI Taxonomy" id="632"/>
    <lineage>
        <taxon>Bacteria</taxon>
        <taxon>Pseudomonadati</taxon>
        <taxon>Pseudomonadota</taxon>
        <taxon>Gammaproteobacteria</taxon>
        <taxon>Enterobacterales</taxon>
        <taxon>Yersiniaceae</taxon>
        <taxon>Yersinia</taxon>
    </lineage>
</organism>
<keyword id="KW-0028">Amino-acid biosynthesis</keyword>
<keyword id="KW-0963">Cytoplasm</keyword>
<keyword id="KW-0413">Isomerase</keyword>
<keyword id="KW-0457">Lysine biosynthesis</keyword>
<keyword id="KW-1185">Reference proteome</keyword>
<name>DAPF_YERPE</name>
<reference key="1">
    <citation type="journal article" date="2001" name="Nature">
        <title>Genome sequence of Yersinia pestis, the causative agent of plague.</title>
        <authorList>
            <person name="Parkhill J."/>
            <person name="Wren B.W."/>
            <person name="Thomson N.R."/>
            <person name="Titball R.W."/>
            <person name="Holden M.T.G."/>
            <person name="Prentice M.B."/>
            <person name="Sebaihia M."/>
            <person name="James K.D."/>
            <person name="Churcher C.M."/>
            <person name="Mungall K.L."/>
            <person name="Baker S."/>
            <person name="Basham D."/>
            <person name="Bentley S.D."/>
            <person name="Brooks K."/>
            <person name="Cerdeno-Tarraga A.-M."/>
            <person name="Chillingworth T."/>
            <person name="Cronin A."/>
            <person name="Davies R.M."/>
            <person name="Davis P."/>
            <person name="Dougan G."/>
            <person name="Feltwell T."/>
            <person name="Hamlin N."/>
            <person name="Holroyd S."/>
            <person name="Jagels K."/>
            <person name="Karlyshev A.V."/>
            <person name="Leather S."/>
            <person name="Moule S."/>
            <person name="Oyston P.C.F."/>
            <person name="Quail M.A."/>
            <person name="Rutherford K.M."/>
            <person name="Simmonds M."/>
            <person name="Skelton J."/>
            <person name="Stevens K."/>
            <person name="Whitehead S."/>
            <person name="Barrell B.G."/>
        </authorList>
    </citation>
    <scope>NUCLEOTIDE SEQUENCE [LARGE SCALE GENOMIC DNA]</scope>
    <source>
        <strain>CO-92 / Biovar Orientalis</strain>
    </source>
</reference>
<reference key="2">
    <citation type="journal article" date="2002" name="J. Bacteriol.">
        <title>Genome sequence of Yersinia pestis KIM.</title>
        <authorList>
            <person name="Deng W."/>
            <person name="Burland V."/>
            <person name="Plunkett G. III"/>
            <person name="Boutin A."/>
            <person name="Mayhew G.F."/>
            <person name="Liss P."/>
            <person name="Perna N.T."/>
            <person name="Rose D.J."/>
            <person name="Mau B."/>
            <person name="Zhou S."/>
            <person name="Schwartz D.C."/>
            <person name="Fetherston J.D."/>
            <person name="Lindler L.E."/>
            <person name="Brubaker R.R."/>
            <person name="Plano G.V."/>
            <person name="Straley S.C."/>
            <person name="McDonough K.A."/>
            <person name="Nilles M.L."/>
            <person name="Matson J.S."/>
            <person name="Blattner F.R."/>
            <person name="Perry R.D."/>
        </authorList>
    </citation>
    <scope>NUCLEOTIDE SEQUENCE [LARGE SCALE GENOMIC DNA]</scope>
    <source>
        <strain>KIM10+ / Biovar Mediaevalis</strain>
    </source>
</reference>
<reference key="3">
    <citation type="journal article" date="2004" name="DNA Res.">
        <title>Complete genome sequence of Yersinia pestis strain 91001, an isolate avirulent to humans.</title>
        <authorList>
            <person name="Song Y."/>
            <person name="Tong Z."/>
            <person name="Wang J."/>
            <person name="Wang L."/>
            <person name="Guo Z."/>
            <person name="Han Y."/>
            <person name="Zhang J."/>
            <person name="Pei D."/>
            <person name="Zhou D."/>
            <person name="Qin H."/>
            <person name="Pang X."/>
            <person name="Han Y."/>
            <person name="Zhai J."/>
            <person name="Li M."/>
            <person name="Cui B."/>
            <person name="Qi Z."/>
            <person name="Jin L."/>
            <person name="Dai R."/>
            <person name="Chen F."/>
            <person name="Li S."/>
            <person name="Ye C."/>
            <person name="Du Z."/>
            <person name="Lin W."/>
            <person name="Wang J."/>
            <person name="Yu J."/>
            <person name="Yang H."/>
            <person name="Wang J."/>
            <person name="Huang P."/>
            <person name="Yang R."/>
        </authorList>
    </citation>
    <scope>NUCLEOTIDE SEQUENCE [LARGE SCALE GENOMIC DNA]</scope>
    <source>
        <strain>91001 / Biovar Mediaevalis</strain>
    </source>
</reference>
<reference key="4">
    <citation type="journal article" date="1996" name="Biochimie">
        <title>Comparative analysis of the cya locus in enterobacteria and related Gram-negative facultative anaerobes.</title>
        <authorList>
            <person name="Trotot P."/>
            <person name="Sismeiro O."/>
            <person name="Vivares C."/>
            <person name="Glaser P."/>
            <person name="Bresson-Roy A."/>
            <person name="Danchin A."/>
        </authorList>
    </citation>
    <scope>NUCLEOTIDE SEQUENCE [GENOMIC DNA] OF 1-198</scope>
    <source>
        <strain>EV 40</strain>
    </source>
</reference>
<gene>
    <name evidence="1" type="primary">dapF</name>
    <name type="ordered locus">YPO3845</name>
    <name type="ordered locus">y0385</name>
    <name type="ordered locus">YP_3202</name>
</gene>
<feature type="chain" id="PRO_0000149884" description="Diaminopimelate epimerase">
    <location>
        <begin position="1"/>
        <end position="274"/>
    </location>
</feature>
<feature type="active site" description="Proton donor" evidence="1">
    <location>
        <position position="73"/>
    </location>
</feature>
<feature type="active site" description="Proton acceptor" evidence="1">
    <location>
        <position position="217"/>
    </location>
</feature>
<feature type="binding site" evidence="1">
    <location>
        <position position="11"/>
    </location>
    <ligand>
        <name>substrate</name>
    </ligand>
</feature>
<feature type="binding site" evidence="1">
    <location>
        <position position="44"/>
    </location>
    <ligand>
        <name>substrate</name>
    </ligand>
</feature>
<feature type="binding site" evidence="1">
    <location>
        <position position="64"/>
    </location>
    <ligand>
        <name>substrate</name>
    </ligand>
</feature>
<feature type="binding site" evidence="1">
    <location>
        <begin position="74"/>
        <end position="75"/>
    </location>
    <ligand>
        <name>substrate</name>
    </ligand>
</feature>
<feature type="binding site" evidence="1">
    <location>
        <position position="157"/>
    </location>
    <ligand>
        <name>substrate</name>
    </ligand>
</feature>
<feature type="binding site" evidence="1">
    <location>
        <position position="190"/>
    </location>
    <ligand>
        <name>substrate</name>
    </ligand>
</feature>
<feature type="binding site" evidence="1">
    <location>
        <begin position="208"/>
        <end position="209"/>
    </location>
    <ligand>
        <name>substrate</name>
    </ligand>
</feature>
<feature type="binding site" evidence="1">
    <location>
        <begin position="218"/>
        <end position="219"/>
    </location>
    <ligand>
        <name>substrate</name>
    </ligand>
</feature>
<feature type="site" description="Could be important to modulate the pK values of the two catalytic cysteine residues" evidence="1">
    <location>
        <position position="159"/>
    </location>
</feature>
<feature type="site" description="Could be important to modulate the pK values of the two catalytic cysteine residues" evidence="1">
    <location>
        <position position="208"/>
    </location>
</feature>
<feature type="site" description="Important for dimerization" evidence="1">
    <location>
        <position position="268"/>
    </location>
</feature>
<feature type="sequence conflict" description="In Ref. 4; AAC44326." evidence="2" ref="4">
    <original>E</original>
    <variation>Q</variation>
    <location>
        <position position="136"/>
    </location>
</feature>
<feature type="sequence conflict" description="In Ref. 4; AAC44326." evidence="2" ref="4">
    <original>PERANIGFMQVVS</original>
    <variation>LSGQISALCRSSV</variation>
    <location>
        <begin position="186"/>
        <end position="198"/>
    </location>
</feature>
<accession>P46357</accession>
<accession>Q0WAG5</accession>
<sequence>MQFSKMHGLGNDFMVVDAVTQNVYFSPELIRRLADRHTGVGFDQMLVVEPPYDPELDFHYRIFNADGSEVSQCGNGARCFARFVRLKGLTNKREISVSTQTGRMILSVTEDEQVCVNMGEPDFEPQTVPFRAAKAEKTYILRAAEHTVLCGVVSMGNPHCVMQVDDVSVANVALLGPVLENHERFPERANIGFMQVVSRDHIRLRVYERGAGETQACGSGACAAVAVGVVQDLLNENVHVELPGGSLHIRWQGPGHPLYMTGPATHVYDGFIHL</sequence>
<dbReference type="EC" id="5.1.1.7" evidence="1"/>
<dbReference type="EMBL" id="AL590842">
    <property type="protein sequence ID" value="CAL22432.1"/>
    <property type="molecule type" value="Genomic_DNA"/>
</dbReference>
<dbReference type="EMBL" id="AE009952">
    <property type="protein sequence ID" value="AAM83974.1"/>
    <property type="molecule type" value="Genomic_DNA"/>
</dbReference>
<dbReference type="EMBL" id="AE017042">
    <property type="protein sequence ID" value="AAS63370.1"/>
    <property type="molecule type" value="Genomic_DNA"/>
</dbReference>
<dbReference type="EMBL" id="U22968">
    <property type="protein sequence ID" value="AAC44326.1"/>
    <property type="molecule type" value="Genomic_DNA"/>
</dbReference>
<dbReference type="PIR" id="AE0468">
    <property type="entry name" value="AE0468"/>
</dbReference>
<dbReference type="RefSeq" id="WP_002211471.1">
    <property type="nucleotide sequence ID" value="NZ_WUCM01000033.1"/>
</dbReference>
<dbReference type="RefSeq" id="YP_002348723.1">
    <property type="nucleotide sequence ID" value="NC_003143.1"/>
</dbReference>
<dbReference type="SMR" id="P46357"/>
<dbReference type="IntAct" id="P46357">
    <property type="interactions" value="1"/>
</dbReference>
<dbReference type="STRING" id="214092.YPO3845"/>
<dbReference type="PaxDb" id="214092-YPO3845"/>
<dbReference type="DNASU" id="1145332"/>
<dbReference type="EnsemblBacteria" id="AAS63370">
    <property type="protein sequence ID" value="AAS63370"/>
    <property type="gene ID" value="YP_3202"/>
</dbReference>
<dbReference type="GeneID" id="57974864"/>
<dbReference type="KEGG" id="ype:YPO3845"/>
<dbReference type="KEGG" id="ypk:y0385"/>
<dbReference type="KEGG" id="ypm:YP_3202"/>
<dbReference type="PATRIC" id="fig|214092.21.peg.4368"/>
<dbReference type="eggNOG" id="COG0253">
    <property type="taxonomic scope" value="Bacteria"/>
</dbReference>
<dbReference type="HOGENOM" id="CLU_053306_1_1_6"/>
<dbReference type="OMA" id="GIRCFAR"/>
<dbReference type="OrthoDB" id="9805408at2"/>
<dbReference type="UniPathway" id="UPA00034">
    <property type="reaction ID" value="UER00025"/>
</dbReference>
<dbReference type="Proteomes" id="UP000000815">
    <property type="component" value="Chromosome"/>
</dbReference>
<dbReference type="Proteomes" id="UP000001019">
    <property type="component" value="Chromosome"/>
</dbReference>
<dbReference type="Proteomes" id="UP000002490">
    <property type="component" value="Chromosome"/>
</dbReference>
<dbReference type="GO" id="GO:0005829">
    <property type="term" value="C:cytosol"/>
    <property type="evidence" value="ECO:0000318"/>
    <property type="project" value="GO_Central"/>
</dbReference>
<dbReference type="GO" id="GO:0008837">
    <property type="term" value="F:diaminopimelate epimerase activity"/>
    <property type="evidence" value="ECO:0000318"/>
    <property type="project" value="GO_Central"/>
</dbReference>
<dbReference type="GO" id="GO:0009089">
    <property type="term" value="P:lysine biosynthetic process via diaminopimelate"/>
    <property type="evidence" value="ECO:0000318"/>
    <property type="project" value="GO_Central"/>
</dbReference>
<dbReference type="FunFam" id="3.10.310.10:FF:000001">
    <property type="entry name" value="Diaminopimelate epimerase"/>
    <property type="match status" value="1"/>
</dbReference>
<dbReference type="FunFam" id="3.10.310.10:FF:000002">
    <property type="entry name" value="Diaminopimelate epimerase"/>
    <property type="match status" value="1"/>
</dbReference>
<dbReference type="Gene3D" id="3.10.310.10">
    <property type="entry name" value="Diaminopimelate Epimerase, Chain A, domain 1"/>
    <property type="match status" value="2"/>
</dbReference>
<dbReference type="HAMAP" id="MF_00197">
    <property type="entry name" value="DAP_epimerase"/>
    <property type="match status" value="1"/>
</dbReference>
<dbReference type="InterPro" id="IPR018510">
    <property type="entry name" value="DAP_epimerase_AS"/>
</dbReference>
<dbReference type="InterPro" id="IPR001653">
    <property type="entry name" value="DAP_epimerase_DapF"/>
</dbReference>
<dbReference type="NCBIfam" id="TIGR00652">
    <property type="entry name" value="DapF"/>
    <property type="match status" value="1"/>
</dbReference>
<dbReference type="PANTHER" id="PTHR31689:SF0">
    <property type="entry name" value="DIAMINOPIMELATE EPIMERASE"/>
    <property type="match status" value="1"/>
</dbReference>
<dbReference type="PANTHER" id="PTHR31689">
    <property type="entry name" value="DIAMINOPIMELATE EPIMERASE, CHLOROPLASTIC"/>
    <property type="match status" value="1"/>
</dbReference>
<dbReference type="Pfam" id="PF01678">
    <property type="entry name" value="DAP_epimerase"/>
    <property type="match status" value="2"/>
</dbReference>
<dbReference type="SUPFAM" id="SSF54506">
    <property type="entry name" value="Diaminopimelate epimerase-like"/>
    <property type="match status" value="1"/>
</dbReference>
<dbReference type="PROSITE" id="PS01326">
    <property type="entry name" value="DAP_EPIMERASE"/>
    <property type="match status" value="1"/>
</dbReference>
<comment type="function">
    <text evidence="1">Catalyzes the stereoinversion of LL-2,6-diaminopimelate (L,L-DAP) to meso-diaminopimelate (meso-DAP), a precursor of L-lysine and an essential component of the bacterial peptidoglycan.</text>
</comment>
<comment type="catalytic activity">
    <reaction evidence="1">
        <text>(2S,6S)-2,6-diaminopimelate = meso-2,6-diaminopimelate</text>
        <dbReference type="Rhea" id="RHEA:15393"/>
        <dbReference type="ChEBI" id="CHEBI:57609"/>
        <dbReference type="ChEBI" id="CHEBI:57791"/>
        <dbReference type="EC" id="5.1.1.7"/>
    </reaction>
</comment>
<comment type="pathway">
    <text evidence="1">Amino-acid biosynthesis; L-lysine biosynthesis via DAP pathway; DL-2,6-diaminopimelate from LL-2,6-diaminopimelate: step 1/1.</text>
</comment>
<comment type="subunit">
    <text evidence="1">Homodimer.</text>
</comment>
<comment type="subcellular location">
    <subcellularLocation>
        <location evidence="1">Cytoplasm</location>
    </subcellularLocation>
</comment>
<comment type="similarity">
    <text evidence="1">Belongs to the diaminopimelate epimerase family.</text>
</comment>